<reference key="1">
    <citation type="journal article" date="2003" name="Infect. Immun.">
        <title>Identification of two eukaryote-like serine/threonine kinases encoded by Chlamydia trachomatis serovar L2 and characterization of interacting partners of Pkn1.</title>
        <authorList>
            <person name="Verma A."/>
            <person name="Maurelli A.T."/>
        </authorList>
    </citation>
    <scope>NUCLEOTIDE SEQUENCE [GENOMIC DNA]</scope>
    <scope>FUNCTION AS A KINASE</scope>
    <scope>CATALYTIC ACTIVITY</scope>
    <scope>INTERACTION WITH INCG AND PKND</scope>
    <scope>DEVELOPMENTAL STAGE</scope>
    <scope>INDUCTION</scope>
    <scope>AUTOPHOSPHORYLATION</scope>
    <scope>PHOSPHORYLATION OF INCG</scope>
    <scope>MUTAGENESIS OF LYS-42</scope>
    <source>
        <strain>L2</strain>
    </source>
</reference>
<reference key="2">
    <citation type="journal article" date="2008" name="Genome Res.">
        <title>Chlamydia trachomatis: genome sequence analysis of lymphogranuloma venereum isolates.</title>
        <authorList>
            <person name="Thomson N.R."/>
            <person name="Holden M.T.G."/>
            <person name="Carder C."/>
            <person name="Lennard N."/>
            <person name="Lockey S.J."/>
            <person name="Marsh P."/>
            <person name="Skipp P."/>
            <person name="O'Connor C.D."/>
            <person name="Goodhead I."/>
            <person name="Norbertzcak H."/>
            <person name="Harris B."/>
            <person name="Ormond D."/>
            <person name="Rance R."/>
            <person name="Quail M.A."/>
            <person name="Parkhill J."/>
            <person name="Stephens R.S."/>
            <person name="Clarke I.N."/>
        </authorList>
    </citation>
    <scope>NUCLEOTIDE SEQUENCE [LARGE SCALE GENOMIC DNA]</scope>
    <source>
        <strain>ATCC VR-902B / DSM 19102 / 434/Bu</strain>
    </source>
</reference>
<gene>
    <name type="primary">pkn1</name>
    <name type="ordered locus">CTL0400</name>
</gene>
<sequence length="614" mass="69638">MEERAAVEYWGDYKVIAELGHGLWSRDVLAEHRFIKKRYILKILPSELSSSENFMRVFQEVIVQLAAIRHASLVAIENVSREGDRYFVVTEENGGTISLAQYLSGRKLSEEEVVHLIQQLCDALELVHSIGLAHGQIHLHSVHVSFFNGIANIYLPEVGFASLLRERMFSTIMQSGSARESITRIRDLLMFEAPEEQEVFGREADVYSVGVLAYYLLVGSFPWGSFPKPSLCMPDSWYDWDGFILSCLQQQREARPKCLREALRRKTSGEQLQVTLDSCREPLREMEIEDTPTELGPPSALIREGERLCEVKEEQHAFVLVEAKSIDEAMVTTVDSEEELESSEGYANPLQSLLAREPVVSRYVEVEREEIKPQPLLTEMIFIEGGEFSRGSGDGQRDELPVHNITLPGFFLDIHPVTNEQFVRFLECVGSEQDEHYNELIRLKDSRIQRRSGRLIIEPGYAKHPVVGVTWYGASSYACWIGKRLPSEAEWEVAASGGKLGLRYPTGEEIDKSKANFFSSDTTPVMSYPSSILGLYDMAGNVYEWCQDWYSYDFYESSALEPDAPLGPPQGVYRVLRGGCWKSLKDDLRCAHRHRNNPGAINSTYGFRCAKDVK</sequence>
<feature type="chain" id="PRO_0000446192" description="Serine/threonine-protein kinase Pkn1">
    <location>
        <begin position="1"/>
        <end position="614"/>
    </location>
</feature>
<feature type="domain" description="Protein kinase" evidence="1">
    <location>
        <begin position="13"/>
        <end position="276"/>
    </location>
</feature>
<feature type="binding site" evidence="1">
    <location>
        <begin position="19"/>
        <end position="27"/>
    </location>
    <ligand>
        <name>ATP</name>
        <dbReference type="ChEBI" id="CHEBI:30616"/>
    </ligand>
</feature>
<feature type="binding site" evidence="1">
    <location>
        <position position="42"/>
    </location>
    <ligand>
        <name>ATP</name>
        <dbReference type="ChEBI" id="CHEBI:30616"/>
    </ligand>
</feature>
<feature type="mutagenesis site" description="No autophosphorylation; protein can be phosphorylated by PknD." evidence="2">
    <original>K</original>
    <variation>A</variation>
    <location>
        <position position="42"/>
    </location>
</feature>
<feature type="sequence conflict" description="In Ref. 1; AAN71625." evidence="3" ref="1">
    <original>E</original>
    <variation>D</variation>
    <location>
        <position position="2"/>
    </location>
</feature>
<feature type="sequence conflict" description="In Ref. 1; AAN71625." evidence="3" ref="1">
    <original>K</original>
    <variation>R</variation>
    <location>
        <position position="14"/>
    </location>
</feature>
<feature type="sequence conflict" description="In Ref. 1; AAN71625." evidence="3" ref="1">
    <original>H</original>
    <variation>R</variation>
    <location>
        <position position="32"/>
    </location>
</feature>
<feature type="sequence conflict" description="In Ref. 1; AAN71625." evidence="3" ref="1">
    <original>G</original>
    <variation>R</variation>
    <location>
        <position position="105"/>
    </location>
</feature>
<accession>A0A0H3MBJ2</accession>
<accession>O84147</accession>
<accession>Q8GDH8</accession>
<organism>
    <name type="scientific">Chlamydia trachomatis serovar L2 (strain ATCC VR-902B / DSM 19102 / 434/Bu)</name>
    <dbReference type="NCBI Taxonomy" id="471472"/>
    <lineage>
        <taxon>Bacteria</taxon>
        <taxon>Pseudomonadati</taxon>
        <taxon>Chlamydiota</taxon>
        <taxon>Chlamydiia</taxon>
        <taxon>Chlamydiales</taxon>
        <taxon>Chlamydiaceae</taxon>
        <taxon>Chlamydia/Chlamydophila group</taxon>
        <taxon>Chlamydia</taxon>
    </lineage>
</organism>
<proteinExistence type="evidence at protein level"/>
<name>PKN1_CHLT2</name>
<dbReference type="EC" id="2.7.11.1" evidence="2"/>
<dbReference type="EMBL" id="AY148435">
    <property type="protein sequence ID" value="AAN71625.1"/>
    <property type="molecule type" value="Genomic_DNA"/>
</dbReference>
<dbReference type="EMBL" id="AM884176">
    <property type="protein sequence ID" value="CAP03840.1"/>
    <property type="molecule type" value="Genomic_DNA"/>
</dbReference>
<dbReference type="RefSeq" id="WP_009873593.1">
    <property type="nucleotide sequence ID" value="NC_010287.1"/>
</dbReference>
<dbReference type="RefSeq" id="YP_001654484.1">
    <property type="nucleotide sequence ID" value="NC_010287.1"/>
</dbReference>
<dbReference type="SMR" id="A0A0H3MBJ2"/>
<dbReference type="KEGG" id="ctb:CTL0400"/>
<dbReference type="PATRIC" id="fig|471472.4.peg.431"/>
<dbReference type="HOGENOM" id="CLU_408763_0_0_0"/>
<dbReference type="Proteomes" id="UP001154402">
    <property type="component" value="Chromosome"/>
</dbReference>
<dbReference type="GO" id="GO:0005524">
    <property type="term" value="F:ATP binding"/>
    <property type="evidence" value="ECO:0007669"/>
    <property type="project" value="UniProtKB-KW"/>
</dbReference>
<dbReference type="GO" id="GO:0120147">
    <property type="term" value="F:formylglycine-generating oxidase activity"/>
    <property type="evidence" value="ECO:0007669"/>
    <property type="project" value="TreeGrafter"/>
</dbReference>
<dbReference type="GO" id="GO:0106310">
    <property type="term" value="F:protein serine kinase activity"/>
    <property type="evidence" value="ECO:0007669"/>
    <property type="project" value="RHEA"/>
</dbReference>
<dbReference type="GO" id="GO:0004674">
    <property type="term" value="F:protein serine/threonine kinase activity"/>
    <property type="evidence" value="ECO:0007669"/>
    <property type="project" value="UniProtKB-EC"/>
</dbReference>
<dbReference type="Gene3D" id="3.90.1580.10">
    <property type="entry name" value="paralog of FGE (formylglycine-generating enzyme)"/>
    <property type="match status" value="1"/>
</dbReference>
<dbReference type="Gene3D" id="3.30.200.20">
    <property type="entry name" value="Phosphorylase Kinase, domain 1"/>
    <property type="match status" value="1"/>
</dbReference>
<dbReference type="Gene3D" id="1.10.510.10">
    <property type="entry name" value="Transferase(Phosphotransferase) domain 1"/>
    <property type="match status" value="1"/>
</dbReference>
<dbReference type="InterPro" id="IPR016187">
    <property type="entry name" value="CTDL_fold"/>
</dbReference>
<dbReference type="InterPro" id="IPR011009">
    <property type="entry name" value="Kinase-like_dom_sf"/>
</dbReference>
<dbReference type="InterPro" id="IPR000719">
    <property type="entry name" value="Prot_kinase_dom"/>
</dbReference>
<dbReference type="InterPro" id="IPR051043">
    <property type="entry name" value="Sulfatase_Mod_Factor_Kinase"/>
</dbReference>
<dbReference type="InterPro" id="IPR005532">
    <property type="entry name" value="SUMF_dom"/>
</dbReference>
<dbReference type="InterPro" id="IPR042095">
    <property type="entry name" value="SUMF_sf"/>
</dbReference>
<dbReference type="PANTHER" id="PTHR23150:SF19">
    <property type="entry name" value="FORMYLGLYCINE-GENERATING ENZYME"/>
    <property type="match status" value="1"/>
</dbReference>
<dbReference type="PANTHER" id="PTHR23150">
    <property type="entry name" value="SULFATASE MODIFYING FACTOR 1, 2"/>
    <property type="match status" value="1"/>
</dbReference>
<dbReference type="Pfam" id="PF03781">
    <property type="entry name" value="FGE-sulfatase"/>
    <property type="match status" value="1"/>
</dbReference>
<dbReference type="Pfam" id="PF00069">
    <property type="entry name" value="Pkinase"/>
    <property type="match status" value="1"/>
</dbReference>
<dbReference type="SMART" id="SM00220">
    <property type="entry name" value="S_TKc"/>
    <property type="match status" value="1"/>
</dbReference>
<dbReference type="SUPFAM" id="SSF56436">
    <property type="entry name" value="C-type lectin-like"/>
    <property type="match status" value="1"/>
</dbReference>
<dbReference type="SUPFAM" id="SSF56112">
    <property type="entry name" value="Protein kinase-like (PK-like)"/>
    <property type="match status" value="1"/>
</dbReference>
<dbReference type="PROSITE" id="PS50011">
    <property type="entry name" value="PROTEIN_KINASE_DOM"/>
    <property type="match status" value="1"/>
</dbReference>
<keyword id="KW-0067">ATP-binding</keyword>
<keyword id="KW-0418">Kinase</keyword>
<keyword id="KW-0547">Nucleotide-binding</keyword>
<keyword id="KW-0808">Transferase</keyword>
<protein>
    <recommendedName>
        <fullName>Serine/threonine-protein kinase Pkn1</fullName>
        <ecNumber evidence="2">2.7.11.1</ecNumber>
    </recommendedName>
</protein>
<evidence type="ECO:0000255" key="1">
    <source>
        <dbReference type="PROSITE-ProRule" id="PRU00159"/>
    </source>
</evidence>
<evidence type="ECO:0000269" key="2">
    <source>
    </source>
</evidence>
<evidence type="ECO:0000305" key="3"/>
<evidence type="ECO:0000305" key="4">
    <source>
    </source>
</evidence>
<comment type="function">
    <text evidence="2 4">Together with the serine/threonine kinase PknD, may play a role in specific interactions with host proteins during host intracellular growth (Probable). Autophosphorylates and phosphorylates IncG, an inclusion-membrane protein required for the modification of the nascent chlamydial inclusion (PubMed:14500499).</text>
</comment>
<comment type="catalytic activity">
    <reaction evidence="2">
        <text>L-seryl-[protein] + ATP = O-phospho-L-seryl-[protein] + ADP + H(+)</text>
        <dbReference type="Rhea" id="RHEA:17989"/>
        <dbReference type="Rhea" id="RHEA-COMP:9863"/>
        <dbReference type="Rhea" id="RHEA-COMP:11604"/>
        <dbReference type="ChEBI" id="CHEBI:15378"/>
        <dbReference type="ChEBI" id="CHEBI:29999"/>
        <dbReference type="ChEBI" id="CHEBI:30616"/>
        <dbReference type="ChEBI" id="CHEBI:83421"/>
        <dbReference type="ChEBI" id="CHEBI:456216"/>
        <dbReference type="EC" id="2.7.11.1"/>
    </reaction>
</comment>
<comment type="catalytic activity">
    <reaction evidence="2">
        <text>L-threonyl-[protein] + ATP = O-phospho-L-threonyl-[protein] + ADP + H(+)</text>
        <dbReference type="Rhea" id="RHEA:46608"/>
        <dbReference type="Rhea" id="RHEA-COMP:11060"/>
        <dbReference type="Rhea" id="RHEA-COMP:11605"/>
        <dbReference type="ChEBI" id="CHEBI:15378"/>
        <dbReference type="ChEBI" id="CHEBI:30013"/>
        <dbReference type="ChEBI" id="CHEBI:30616"/>
        <dbReference type="ChEBI" id="CHEBI:61977"/>
        <dbReference type="ChEBI" id="CHEBI:456216"/>
        <dbReference type="EC" id="2.7.11.1"/>
    </reaction>
</comment>
<comment type="subunit">
    <text evidence="2">Interacts with PknD, interacts with and phosphorylates IncG.</text>
</comment>
<comment type="developmental stage">
    <text evidence="2">Detected in isolated elementary bodies 40 hours post-infection (at protein level).</text>
</comment>
<comment type="induction">
    <text evidence="2">Transcribed after 6 hours in infected mouse fibroblast cells, that is from the mid-phase of the developmental cycle.</text>
</comment>
<comment type="PTM">
    <text evidence="2">Autophosphorylates on serine and threonine residues (PubMed:14500499). Present in elementary bodies 40 hours post-infection as 2 proteins of approximately 70 and 65 kDa; the smaller one may be due to differential phosphorylation or degradation (PubMed:14500499).</text>
</comment>
<comment type="similarity">
    <text evidence="4">Belongs to the protein kinase superfamily. Ser/Thr protein kinase family.</text>
</comment>
<comment type="caution">
    <text evidence="4">Gln-136 is present instead of the conserved Asp which is expected to be a proton acceptor in the active site.</text>
</comment>